<comment type="function">
    <text evidence="1">Associates with aggregated proteins, together with IbpA, to stabilize and protect them from irreversible denaturation and extensive proteolysis during heat shock and oxidative stress. Aggregated proteins bound to the IbpAB complex are more efficiently refolded and reactivated by the ATP-dependent chaperone systems ClpB and DnaK/DnaJ/GrpE. Its activity is ATP-independent.</text>
</comment>
<comment type="subunit">
    <text evidence="1">Homodimer. Forms homomultimers of about 100-150 subunits at optimal growth temperatures. Conformation changes to oligomers at high temperatures or high ionic concentrations. The decrease in size of the multimers is accompanied by an increase in chaperone activity.</text>
</comment>
<comment type="subcellular location">
    <subcellularLocation>
        <location evidence="1">Cytoplasm</location>
    </subcellularLocation>
</comment>
<comment type="domain">
    <text evidence="1">The N- and C-terminal flexible termini are involved in oligomerization and in the binding of non-native substrate proteins, and are essential for chaperone activity.</text>
</comment>
<comment type="similarity">
    <text evidence="1 2">Belongs to the small heat shock protein (HSP20) family.</text>
</comment>
<feature type="chain" id="PRO_1000189106" description="Small heat shock protein IbpB">
    <location>
        <begin position="1"/>
        <end position="142"/>
    </location>
</feature>
<feature type="domain" description="sHSP" evidence="2">
    <location>
        <begin position="26"/>
        <end position="137"/>
    </location>
</feature>
<dbReference type="EMBL" id="CP000964">
    <property type="protein sequence ID" value="ACI10740.1"/>
    <property type="molecule type" value="Genomic_DNA"/>
</dbReference>
<dbReference type="SMR" id="B5XT61"/>
<dbReference type="KEGG" id="kpe:KPK_0011"/>
<dbReference type="HOGENOM" id="CLU_046737_4_2_6"/>
<dbReference type="Proteomes" id="UP000001734">
    <property type="component" value="Chromosome"/>
</dbReference>
<dbReference type="GO" id="GO:0005737">
    <property type="term" value="C:cytoplasm"/>
    <property type="evidence" value="ECO:0007669"/>
    <property type="project" value="UniProtKB-SubCell"/>
</dbReference>
<dbReference type="GO" id="GO:0050821">
    <property type="term" value="P:protein stabilization"/>
    <property type="evidence" value="ECO:0007669"/>
    <property type="project" value="UniProtKB-UniRule"/>
</dbReference>
<dbReference type="CDD" id="cd06470">
    <property type="entry name" value="ACD_IbpA-B_like"/>
    <property type="match status" value="1"/>
</dbReference>
<dbReference type="Gene3D" id="2.60.40.790">
    <property type="match status" value="1"/>
</dbReference>
<dbReference type="HAMAP" id="MF_02001">
    <property type="entry name" value="HSP20_IbpB"/>
    <property type="match status" value="1"/>
</dbReference>
<dbReference type="InterPro" id="IPR002068">
    <property type="entry name" value="A-crystallin/Hsp20_dom"/>
</dbReference>
<dbReference type="InterPro" id="IPR037913">
    <property type="entry name" value="ACD_IbpA/B"/>
</dbReference>
<dbReference type="InterPro" id="IPR008978">
    <property type="entry name" value="HSP20-like_chaperone"/>
</dbReference>
<dbReference type="InterPro" id="IPR022848">
    <property type="entry name" value="HSP20_IbpB"/>
</dbReference>
<dbReference type="NCBIfam" id="NF008618">
    <property type="entry name" value="PRK11597.1"/>
    <property type="match status" value="1"/>
</dbReference>
<dbReference type="PANTHER" id="PTHR47062">
    <property type="match status" value="1"/>
</dbReference>
<dbReference type="PANTHER" id="PTHR47062:SF2">
    <property type="entry name" value="SMALL HEAT SHOCK PROTEIN IBPB"/>
    <property type="match status" value="1"/>
</dbReference>
<dbReference type="Pfam" id="PF00011">
    <property type="entry name" value="HSP20"/>
    <property type="match status" value="1"/>
</dbReference>
<dbReference type="SUPFAM" id="SSF49764">
    <property type="entry name" value="HSP20-like chaperones"/>
    <property type="match status" value="1"/>
</dbReference>
<dbReference type="PROSITE" id="PS01031">
    <property type="entry name" value="SHSP"/>
    <property type="match status" value="1"/>
</dbReference>
<proteinExistence type="inferred from homology"/>
<protein>
    <recommendedName>
        <fullName evidence="1">Small heat shock protein IbpB</fullName>
    </recommendedName>
    <alternativeName>
        <fullName evidence="1">16 kDa heat shock protein B</fullName>
    </alternativeName>
</protein>
<evidence type="ECO:0000255" key="1">
    <source>
        <dbReference type="HAMAP-Rule" id="MF_02001"/>
    </source>
</evidence>
<evidence type="ECO:0000255" key="2">
    <source>
        <dbReference type="PROSITE-ProRule" id="PRU00285"/>
    </source>
</evidence>
<name>IBPB_KLEP3</name>
<accession>B5XT61</accession>
<organism>
    <name type="scientific">Klebsiella pneumoniae (strain 342)</name>
    <dbReference type="NCBI Taxonomy" id="507522"/>
    <lineage>
        <taxon>Bacteria</taxon>
        <taxon>Pseudomonadati</taxon>
        <taxon>Pseudomonadota</taxon>
        <taxon>Gammaproteobacteria</taxon>
        <taxon>Enterobacterales</taxon>
        <taxon>Enterobacteriaceae</taxon>
        <taxon>Klebsiella/Raoultella group</taxon>
        <taxon>Klebsiella</taxon>
        <taxon>Klebsiella pneumoniae complex</taxon>
    </lineage>
</organism>
<reference key="1">
    <citation type="journal article" date="2008" name="PLoS Genet.">
        <title>Complete genome sequence of the N2-fixing broad host range endophyte Klebsiella pneumoniae 342 and virulence predictions verified in mice.</title>
        <authorList>
            <person name="Fouts D.E."/>
            <person name="Tyler H.L."/>
            <person name="DeBoy R.T."/>
            <person name="Daugherty S."/>
            <person name="Ren Q."/>
            <person name="Badger J.H."/>
            <person name="Durkin A.S."/>
            <person name="Huot H."/>
            <person name="Shrivastava S."/>
            <person name="Kothari S."/>
            <person name="Dodson R.J."/>
            <person name="Mohamoud Y."/>
            <person name="Khouri H."/>
            <person name="Roesch L.F.W."/>
            <person name="Krogfelt K.A."/>
            <person name="Struve C."/>
            <person name="Triplett E.W."/>
            <person name="Methe B.A."/>
        </authorList>
    </citation>
    <scope>NUCLEOTIDE SEQUENCE [LARGE SCALE GENOMIC DNA]</scope>
    <source>
        <strain>342</strain>
    </source>
</reference>
<gene>
    <name evidence="1" type="primary">ibpB</name>
    <name type="ordered locus">KPK_0011</name>
</gene>
<sequence length="142" mass="15969">MRNYDLSPLLRQWIGFDKLANALQTAGESQSFPPYNIEKSDDNHYRITLALAGFRQEDLDIQLEGTRLVVKGTPQQPEKETTWLHQGLVSQAFSLSFTLADNMEVSGATFTNGLLHIDLTRNEPEQIAPQRIAISERPALNS</sequence>
<keyword id="KW-0143">Chaperone</keyword>
<keyword id="KW-0963">Cytoplasm</keyword>
<keyword id="KW-0346">Stress response</keyword>